<evidence type="ECO:0000255" key="1">
    <source>
        <dbReference type="HAMAP-Rule" id="MF_00303"/>
    </source>
</evidence>
<proteinExistence type="inferred from homology"/>
<sequence>MEIKKINDQKVQYFFEVSSKELETQLASAYEKIKPKVEIKGFRKGHVPRKIFENRFGKDNLYSDALENIVQTKYQEVLQKKDFESMGMPQVIDLDEKKLKDNQNFTFGLEFIVKPKVTLKKYLGLEITKDDLEVTDYEVEEKINSLLEKQTTLESKTQNDFLELTDIAIFDFEGFVDDKPFEGGTAKDFSLEIGSGQFVPGFEDQMLGMKQGQTKDINITFPSDYHQKSLANQKAVFKVTLHQIKTKKIPQLTDNLVKSLKLVNASTVEELKNNTKQTLLAQKKHKEKENVEKQVIEQLVKNSELEIPQEIVSQEQIRLQKEFEAQLKQQNLTLEQYKQYLGIDDEKMEKEFSQQAQKNIEYQLIMEQVAAQEKLTISQEKIEQKYQNLSNHYKVPVNQIKQNLPEKNLKHSLLMGEALELVINKAVVAK</sequence>
<protein>
    <recommendedName>
        <fullName evidence="1">Trigger factor</fullName>
        <shortName evidence="1">TF</shortName>
        <ecNumber evidence="1">5.2.1.8</ecNumber>
    </recommendedName>
    <alternativeName>
        <fullName evidence="1">PPIase</fullName>
    </alternativeName>
</protein>
<organism>
    <name type="scientific">Onion yellows phytoplasma (strain OY-M)</name>
    <dbReference type="NCBI Taxonomy" id="262768"/>
    <lineage>
        <taxon>Bacteria</taxon>
        <taxon>Bacillati</taxon>
        <taxon>Mycoplasmatota</taxon>
        <taxon>Mollicutes</taxon>
        <taxon>Acholeplasmatales</taxon>
        <taxon>Acholeplasmataceae</taxon>
        <taxon>Candidatus Phytoplasma</taxon>
        <taxon>16SrI (Aster yellows group)</taxon>
    </lineage>
</organism>
<reference key="1">
    <citation type="journal article" date="2004" name="Nat. Genet.">
        <title>Reductive evolution suggested from the complete genome sequence of a plant-pathogenic phytoplasma.</title>
        <authorList>
            <person name="Oshima K."/>
            <person name="Kakizawa S."/>
            <person name="Nishigawa H."/>
            <person name="Jung H.-Y."/>
            <person name="Wei W."/>
            <person name="Suzuki S."/>
            <person name="Arashida R."/>
            <person name="Nakata D."/>
            <person name="Miyata S."/>
            <person name="Ugaki M."/>
            <person name="Namba S."/>
        </authorList>
    </citation>
    <scope>NUCLEOTIDE SEQUENCE [LARGE SCALE GENOMIC DNA]</scope>
    <source>
        <strain>OY-M</strain>
    </source>
</reference>
<keyword id="KW-0131">Cell cycle</keyword>
<keyword id="KW-0132">Cell division</keyword>
<keyword id="KW-0143">Chaperone</keyword>
<keyword id="KW-0963">Cytoplasm</keyword>
<keyword id="KW-0413">Isomerase</keyword>
<keyword id="KW-0697">Rotamase</keyword>
<feature type="chain" id="PRO_0000179399" description="Trigger factor">
    <location>
        <begin position="1"/>
        <end position="430"/>
    </location>
</feature>
<feature type="domain" description="PPIase FKBP-type" evidence="1">
    <location>
        <begin position="165"/>
        <end position="250"/>
    </location>
</feature>
<name>TIG_ONYPE</name>
<accession>Q6YQC6</accession>
<comment type="function">
    <text evidence="1">Involved in protein export. Acts as a chaperone by maintaining the newly synthesized protein in an open conformation. Functions as a peptidyl-prolyl cis-trans isomerase.</text>
</comment>
<comment type="catalytic activity">
    <reaction evidence="1">
        <text>[protein]-peptidylproline (omega=180) = [protein]-peptidylproline (omega=0)</text>
        <dbReference type="Rhea" id="RHEA:16237"/>
        <dbReference type="Rhea" id="RHEA-COMP:10747"/>
        <dbReference type="Rhea" id="RHEA-COMP:10748"/>
        <dbReference type="ChEBI" id="CHEBI:83833"/>
        <dbReference type="ChEBI" id="CHEBI:83834"/>
        <dbReference type="EC" id="5.2.1.8"/>
    </reaction>
</comment>
<comment type="subcellular location">
    <subcellularLocation>
        <location>Cytoplasm</location>
    </subcellularLocation>
    <text evidence="1">About half TF is bound to the ribosome near the polypeptide exit tunnel while the other half is free in the cytoplasm.</text>
</comment>
<comment type="domain">
    <text evidence="1">Consists of 3 domains; the N-terminus binds the ribosome, the middle domain has PPIase activity, while the C-terminus has intrinsic chaperone activity on its own.</text>
</comment>
<comment type="similarity">
    <text evidence="1">Belongs to the FKBP-type PPIase family. Tig subfamily.</text>
</comment>
<dbReference type="EC" id="5.2.1.8" evidence="1"/>
<dbReference type="EMBL" id="AP006628">
    <property type="protein sequence ID" value="BAD04534.1"/>
    <property type="molecule type" value="Genomic_DNA"/>
</dbReference>
<dbReference type="SMR" id="Q6YQC6"/>
<dbReference type="STRING" id="262768.PAM_449"/>
<dbReference type="KEGG" id="poy:PAM_449"/>
<dbReference type="eggNOG" id="COG0544">
    <property type="taxonomic scope" value="Bacteria"/>
</dbReference>
<dbReference type="HOGENOM" id="CLU_033058_3_2_14"/>
<dbReference type="BioCyc" id="OYEL262768:G1G26-530-MONOMER"/>
<dbReference type="Proteomes" id="UP000002523">
    <property type="component" value="Chromosome"/>
</dbReference>
<dbReference type="GO" id="GO:0005737">
    <property type="term" value="C:cytoplasm"/>
    <property type="evidence" value="ECO:0007669"/>
    <property type="project" value="UniProtKB-SubCell"/>
</dbReference>
<dbReference type="GO" id="GO:0003755">
    <property type="term" value="F:peptidyl-prolyl cis-trans isomerase activity"/>
    <property type="evidence" value="ECO:0007669"/>
    <property type="project" value="UniProtKB-UniRule"/>
</dbReference>
<dbReference type="GO" id="GO:0044183">
    <property type="term" value="F:protein folding chaperone"/>
    <property type="evidence" value="ECO:0007669"/>
    <property type="project" value="TreeGrafter"/>
</dbReference>
<dbReference type="GO" id="GO:0043022">
    <property type="term" value="F:ribosome binding"/>
    <property type="evidence" value="ECO:0007669"/>
    <property type="project" value="TreeGrafter"/>
</dbReference>
<dbReference type="GO" id="GO:0051083">
    <property type="term" value="P:'de novo' cotranslational protein folding"/>
    <property type="evidence" value="ECO:0007669"/>
    <property type="project" value="TreeGrafter"/>
</dbReference>
<dbReference type="GO" id="GO:0051301">
    <property type="term" value="P:cell division"/>
    <property type="evidence" value="ECO:0007669"/>
    <property type="project" value="UniProtKB-KW"/>
</dbReference>
<dbReference type="GO" id="GO:0061077">
    <property type="term" value="P:chaperone-mediated protein folding"/>
    <property type="evidence" value="ECO:0007669"/>
    <property type="project" value="TreeGrafter"/>
</dbReference>
<dbReference type="GO" id="GO:0015031">
    <property type="term" value="P:protein transport"/>
    <property type="evidence" value="ECO:0007669"/>
    <property type="project" value="UniProtKB-UniRule"/>
</dbReference>
<dbReference type="GO" id="GO:0043335">
    <property type="term" value="P:protein unfolding"/>
    <property type="evidence" value="ECO:0007669"/>
    <property type="project" value="TreeGrafter"/>
</dbReference>
<dbReference type="FunFam" id="3.10.50.40:FF:000001">
    <property type="entry name" value="Trigger factor"/>
    <property type="match status" value="1"/>
</dbReference>
<dbReference type="Gene3D" id="3.10.50.40">
    <property type="match status" value="1"/>
</dbReference>
<dbReference type="Gene3D" id="3.30.70.1050">
    <property type="entry name" value="Trigger factor ribosome-binding domain"/>
    <property type="match status" value="1"/>
</dbReference>
<dbReference type="Gene3D" id="1.10.3120.10">
    <property type="entry name" value="Trigger factor, C-terminal domain"/>
    <property type="match status" value="1"/>
</dbReference>
<dbReference type="HAMAP" id="MF_00303">
    <property type="entry name" value="Trigger_factor_Tig"/>
    <property type="match status" value="1"/>
</dbReference>
<dbReference type="InterPro" id="IPR046357">
    <property type="entry name" value="PPIase_dom_sf"/>
</dbReference>
<dbReference type="InterPro" id="IPR001179">
    <property type="entry name" value="PPIase_FKBP_dom"/>
</dbReference>
<dbReference type="InterPro" id="IPR005215">
    <property type="entry name" value="Trig_fac"/>
</dbReference>
<dbReference type="InterPro" id="IPR008880">
    <property type="entry name" value="Trigger_fac_C"/>
</dbReference>
<dbReference type="InterPro" id="IPR037041">
    <property type="entry name" value="Trigger_fac_C_sf"/>
</dbReference>
<dbReference type="InterPro" id="IPR008881">
    <property type="entry name" value="Trigger_fac_ribosome-bd_bac"/>
</dbReference>
<dbReference type="InterPro" id="IPR036611">
    <property type="entry name" value="Trigger_fac_ribosome-bd_sf"/>
</dbReference>
<dbReference type="InterPro" id="IPR027304">
    <property type="entry name" value="Trigger_fact/SurA_dom_sf"/>
</dbReference>
<dbReference type="NCBIfam" id="TIGR00115">
    <property type="entry name" value="tig"/>
    <property type="match status" value="1"/>
</dbReference>
<dbReference type="PANTHER" id="PTHR30560">
    <property type="entry name" value="TRIGGER FACTOR CHAPERONE AND PEPTIDYL-PROLYL CIS/TRANS ISOMERASE"/>
    <property type="match status" value="1"/>
</dbReference>
<dbReference type="PANTHER" id="PTHR30560:SF3">
    <property type="entry name" value="TRIGGER FACTOR-LIKE PROTEIN TIG, CHLOROPLASTIC"/>
    <property type="match status" value="1"/>
</dbReference>
<dbReference type="Pfam" id="PF00254">
    <property type="entry name" value="FKBP_C"/>
    <property type="match status" value="1"/>
</dbReference>
<dbReference type="Pfam" id="PF05698">
    <property type="entry name" value="Trigger_C"/>
    <property type="match status" value="1"/>
</dbReference>
<dbReference type="Pfam" id="PF05697">
    <property type="entry name" value="Trigger_N"/>
    <property type="match status" value="1"/>
</dbReference>
<dbReference type="PIRSF" id="PIRSF003095">
    <property type="entry name" value="Trigger_factor"/>
    <property type="match status" value="1"/>
</dbReference>
<dbReference type="SUPFAM" id="SSF54534">
    <property type="entry name" value="FKBP-like"/>
    <property type="match status" value="1"/>
</dbReference>
<dbReference type="SUPFAM" id="SSF109998">
    <property type="entry name" value="Triger factor/SurA peptide-binding domain-like"/>
    <property type="match status" value="1"/>
</dbReference>
<dbReference type="SUPFAM" id="SSF102735">
    <property type="entry name" value="Trigger factor ribosome-binding domain"/>
    <property type="match status" value="1"/>
</dbReference>
<dbReference type="PROSITE" id="PS50059">
    <property type="entry name" value="FKBP_PPIASE"/>
    <property type="match status" value="1"/>
</dbReference>
<gene>
    <name evidence="1" type="primary">tig</name>
    <name type="ordered locus">PAM_449</name>
</gene>